<comment type="function">
    <text evidence="1">Gustducin-linked G-protein coupled receptor that plays a role in the perception of bitterness (By similarity). The activity of this receptor stimulates GNAT3, activating the gustducin G-protein pathway (By similarity). Likely plays a role in sensing the chemical composition of the gastrointestinal content and other extra-oral tissues via the inhibitory G-protein pathways (By similarity).</text>
</comment>
<comment type="catalytic activity">
    <reaction evidence="1">
        <text>Ca(2+)(in) = Ca(2+)(out)</text>
        <dbReference type="Rhea" id="RHEA:29671"/>
        <dbReference type="ChEBI" id="CHEBI:29108"/>
    </reaction>
</comment>
<comment type="catalytic activity">
    <reaction evidence="1">
        <text>3',5'-cyclic AMP(in) = 3',5'-cyclic AMP(out)</text>
        <dbReference type="Rhea" id="RHEA:76223"/>
        <dbReference type="ChEBI" id="CHEBI:58165"/>
    </reaction>
</comment>
<comment type="activity regulation">
    <text evidence="1">Basal activity is enhanced by binding to bitter tastants, such as flufenamic acid and aristolochic acid (By similarity). Regulated by cholesterol in a concentration-dependent manner (By similarity).</text>
</comment>
<comment type="subunit">
    <text evidence="1">Core component of the TAS2R14-GNAI1 complex, consisting of TAS2R14, GNAI1, GNB1 and GNG2; within the complex interacts with GNAI1 (By similarity). Core component of the TAS2R14-GNAT3 complex, consisting of TAS2R14, GNAT3, GNB1 and GNG2; within the complex interacts with GNAT3 (By similarity). Core component of the TAS2R14-GNAS2 complex, consisting of TAS2R14, GNAS2, GNB1 and GNG2; within the complex interacts with GNAS2 (By similarity).</text>
</comment>
<comment type="subcellular location">
    <subcellularLocation>
        <location>Membrane</location>
        <topology evidence="1">Multi-pass membrane protein</topology>
    </subcellularLocation>
</comment>
<comment type="miscellaneous">
    <text>Most taste cells may be activated by a limited number of bitter compounds; individual taste cells can discriminate among bitter stimuli.</text>
</comment>
<comment type="similarity">
    <text evidence="3">Belongs to the G-protein coupled receptor T2R family.</text>
</comment>
<gene>
    <name type="primary">TAS2R14</name>
</gene>
<keyword id="KW-0297">G-protein coupled receptor</keyword>
<keyword id="KW-0325">Glycoprotein</keyword>
<keyword id="KW-0472">Membrane</keyword>
<keyword id="KW-0675">Receptor</keyword>
<keyword id="KW-0716">Sensory transduction</keyword>
<keyword id="KW-0919">Taste</keyword>
<keyword id="KW-0807">Transducer</keyword>
<keyword id="KW-0812">Transmembrane</keyword>
<keyword id="KW-1133">Transmembrane helix</keyword>
<feature type="chain" id="PRO_0000082259" description="Taste receptor type 2 member 14">
    <location>
        <begin position="1"/>
        <end position="319"/>
    </location>
</feature>
<feature type="topological domain" description="Extracellular" evidence="1">
    <location>
        <begin position="1"/>
        <end position="7"/>
    </location>
</feature>
<feature type="transmembrane region" description="Helical; Name=1" evidence="1">
    <location>
        <begin position="8"/>
        <end position="28"/>
    </location>
</feature>
<feature type="topological domain" description="Cytoplasmic" evidence="1">
    <location>
        <begin position="29"/>
        <end position="55"/>
    </location>
</feature>
<feature type="transmembrane region" description="Helical; Name=2" evidence="1">
    <location>
        <begin position="56"/>
        <end position="76"/>
    </location>
</feature>
<feature type="topological domain" description="Extracellular" evidence="1">
    <location>
        <begin position="77"/>
        <end position="87"/>
    </location>
</feature>
<feature type="transmembrane region" description="Helical; Name=3" evidence="1">
    <location>
        <begin position="88"/>
        <end position="108"/>
    </location>
</feature>
<feature type="topological domain" description="Cytoplasmic" evidence="1">
    <location>
        <begin position="109"/>
        <end position="129"/>
    </location>
</feature>
<feature type="transmembrane region" description="Helical; Name=4" evidence="1">
    <location>
        <begin position="130"/>
        <end position="150"/>
    </location>
</feature>
<feature type="topological domain" description="Extracellular" evidence="1">
    <location>
        <begin position="151"/>
        <end position="184"/>
    </location>
</feature>
<feature type="transmembrane region" description="Helical; Name=5" evidence="1">
    <location>
        <begin position="185"/>
        <end position="205"/>
    </location>
</feature>
<feature type="topological domain" description="Cytoplasmic" evidence="1">
    <location>
        <begin position="206"/>
        <end position="232"/>
    </location>
</feature>
<feature type="transmembrane region" description="Helical; Name=6" evidence="1">
    <location>
        <begin position="233"/>
        <end position="253"/>
    </location>
</feature>
<feature type="topological domain" description="Extracellular" evidence="1">
    <location>
        <begin position="254"/>
        <end position="261"/>
    </location>
</feature>
<feature type="transmembrane region" description="Helical; Name=7" evidence="1">
    <location>
        <begin position="262"/>
        <end position="282"/>
    </location>
</feature>
<feature type="topological domain" description="Cytoplasmic" evidence="1">
    <location>
        <begin position="283"/>
        <end position="317"/>
    </location>
</feature>
<feature type="binding site" evidence="1">
    <location>
        <position position="86"/>
    </location>
    <ligand>
        <name>cholesterol</name>
        <dbReference type="ChEBI" id="CHEBI:16113"/>
    </ligand>
</feature>
<feature type="binding site" evidence="1">
    <location>
        <position position="89"/>
    </location>
    <ligand>
        <name>cholesterol</name>
        <dbReference type="ChEBI" id="CHEBI:16113"/>
    </ligand>
</feature>
<feature type="binding site" evidence="1">
    <location>
        <position position="180"/>
    </location>
    <ligand>
        <name>cholesterol</name>
        <dbReference type="ChEBI" id="CHEBI:16113"/>
    </ligand>
</feature>
<feature type="binding site" evidence="1">
    <location>
        <position position="265"/>
    </location>
    <ligand>
        <name>cholesterol</name>
        <dbReference type="ChEBI" id="CHEBI:16113"/>
    </ligand>
</feature>
<feature type="binding site" evidence="1">
    <location>
        <position position="268"/>
    </location>
    <ligand>
        <name>cholesterol</name>
        <dbReference type="ChEBI" id="CHEBI:16113"/>
    </ligand>
</feature>
<feature type="glycosylation site" description="N-linked (GlcNAc...) asparagine" evidence="2">
    <location>
        <position position="153"/>
    </location>
</feature>
<feature type="glycosylation site" description="N-linked (GlcNAc...) asparagine" evidence="2">
    <location>
        <position position="162"/>
    </location>
</feature>
<organism>
    <name type="scientific">Papio hamadryas</name>
    <name type="common">Hamadryas baboon</name>
    <dbReference type="NCBI Taxonomy" id="9557"/>
    <lineage>
        <taxon>Eukaryota</taxon>
        <taxon>Metazoa</taxon>
        <taxon>Chordata</taxon>
        <taxon>Craniata</taxon>
        <taxon>Vertebrata</taxon>
        <taxon>Euteleostomi</taxon>
        <taxon>Mammalia</taxon>
        <taxon>Eutheria</taxon>
        <taxon>Euarchontoglires</taxon>
        <taxon>Primates</taxon>
        <taxon>Haplorrhini</taxon>
        <taxon>Catarrhini</taxon>
        <taxon>Cercopithecidae</taxon>
        <taxon>Cercopithecinae</taxon>
        <taxon>Papio</taxon>
    </lineage>
</organism>
<reference key="1">
    <citation type="journal article" date="2005" name="Mol. Biol. Evol.">
        <title>Evolution of bitter taste receptors in humans and apes.</title>
        <authorList>
            <person name="Fischer A."/>
            <person name="Gilad Y."/>
            <person name="Man O."/>
            <person name="Paeaebo S."/>
        </authorList>
    </citation>
    <scope>NUCLEOTIDE SEQUENCE [GENOMIC DNA]</scope>
</reference>
<accession>Q646F4</accession>
<sequence length="319" mass="36586">MDGVIKSIFTFILILEFIIGNLGNSFIVLVNCIDWVKRRKISLVDQLLIALAISRISLVWSIFGSWCVSVVFPALFATEKLLRMLTNIWTVTNHFSVWLATILGTFYFLKIANFSNSIFLYLKWRVKKVVLVLLLVTLVLLFLNILLINIHINASINGYRGNMTCSSASCNFIRFSSAIALTSTVFILIPFTLSLATFLLLSFSLWKHRKKMQHTVKGYRDVSTKAHRGVMQTVITFLLLYAVFFLTFFVSIWISERLKENQIIILSEMMGLAYPSGHSCVLILGNKKLRQASLSVLWWLRYRFKDGELSGHKEFRESS</sequence>
<dbReference type="EMBL" id="AY724828">
    <property type="protein sequence ID" value="AAU21065.1"/>
    <property type="molecule type" value="Genomic_DNA"/>
</dbReference>
<dbReference type="SMR" id="Q646F4"/>
<dbReference type="GlyCosmos" id="Q646F4">
    <property type="glycosylation" value="2 sites, No reported glycans"/>
</dbReference>
<dbReference type="GO" id="GO:0005886">
    <property type="term" value="C:plasma membrane"/>
    <property type="evidence" value="ECO:0007669"/>
    <property type="project" value="UniProtKB-ARBA"/>
</dbReference>
<dbReference type="GO" id="GO:0033038">
    <property type="term" value="F:bitter taste receptor activity"/>
    <property type="evidence" value="ECO:0007669"/>
    <property type="project" value="InterPro"/>
</dbReference>
<dbReference type="GO" id="GO:0004930">
    <property type="term" value="F:G protein-coupled receptor activity"/>
    <property type="evidence" value="ECO:0007669"/>
    <property type="project" value="UniProtKB-KW"/>
</dbReference>
<dbReference type="CDD" id="cd15019">
    <property type="entry name" value="7tm_TAS2R14-like"/>
    <property type="match status" value="1"/>
</dbReference>
<dbReference type="FunFam" id="1.20.1070.10:FF:000042">
    <property type="entry name" value="Taste receptor type 2 member 7"/>
    <property type="match status" value="1"/>
</dbReference>
<dbReference type="Gene3D" id="1.20.1070.10">
    <property type="entry name" value="Rhodopsin 7-helix transmembrane proteins"/>
    <property type="match status" value="1"/>
</dbReference>
<dbReference type="InterPro" id="IPR017452">
    <property type="entry name" value="GPCR_Rhodpsn_7TM"/>
</dbReference>
<dbReference type="InterPro" id="IPR007960">
    <property type="entry name" value="TAS2R"/>
</dbReference>
<dbReference type="PANTHER" id="PTHR11394">
    <property type="entry name" value="TASTE RECEPTOR TYPE 2"/>
    <property type="match status" value="1"/>
</dbReference>
<dbReference type="PANTHER" id="PTHR11394:SF23">
    <property type="entry name" value="TASTE RECEPTOR TYPE 2 MEMBER 14"/>
    <property type="match status" value="1"/>
</dbReference>
<dbReference type="Pfam" id="PF05296">
    <property type="entry name" value="TAS2R"/>
    <property type="match status" value="1"/>
</dbReference>
<dbReference type="SUPFAM" id="SSF81321">
    <property type="entry name" value="Family A G protein-coupled receptor-like"/>
    <property type="match status" value="1"/>
</dbReference>
<dbReference type="PROSITE" id="PS50262">
    <property type="entry name" value="G_PROTEIN_RECEP_F1_2"/>
    <property type="match status" value="1"/>
</dbReference>
<protein>
    <recommendedName>
        <fullName>Taste receptor type 2 member 14</fullName>
        <shortName>T2R14</shortName>
    </recommendedName>
</protein>
<proteinExistence type="inferred from homology"/>
<name>T2R14_PAPHA</name>
<evidence type="ECO:0000250" key="1">
    <source>
        <dbReference type="UniProtKB" id="Q9NYV8"/>
    </source>
</evidence>
<evidence type="ECO:0000255" key="2"/>
<evidence type="ECO:0000305" key="3"/>